<proteinExistence type="inferred from homology"/>
<evidence type="ECO:0000250" key="1">
    <source>
        <dbReference type="UniProtKB" id="P13569"/>
    </source>
</evidence>
<evidence type="ECO:0000250" key="2">
    <source>
        <dbReference type="UniProtKB" id="P26361"/>
    </source>
</evidence>
<evidence type="ECO:0000250" key="3">
    <source>
        <dbReference type="UniProtKB" id="P34158"/>
    </source>
</evidence>
<evidence type="ECO:0000255" key="4"/>
<evidence type="ECO:0000255" key="5">
    <source>
        <dbReference type="PROSITE-ProRule" id="PRU00434"/>
    </source>
</evidence>
<evidence type="ECO:0000255" key="6">
    <source>
        <dbReference type="PROSITE-ProRule" id="PRU00441"/>
    </source>
</evidence>
<evidence type="ECO:0000256" key="7">
    <source>
        <dbReference type="SAM" id="MobiDB-lite"/>
    </source>
</evidence>
<evidence type="ECO:0000305" key="8"/>
<gene>
    <name evidence="1" type="primary">CFTR</name>
    <name type="synonym">ABCC7</name>
</gene>
<sequence>MQRSPLEKASVVSKLFFSWTRPILKKGYRQRLELSDIYQIPSADSADNLSEKLEREWDRELASKKNPKLINALRRCFFWRFTFYGILLYLGEVTKAVQPLLLGRIIASYDPDNKTERSIAIYLGIGLCLLFIVRTLLLHPAIFGLHHIGMQMRIAMFSLIYKKTLKLSSRVLDKISIGQLVSLLSNNLNKFDEGLALAHFVWIAPLQVALLMGLIWELLQASAFCGLGFLIVLALFQAGLGRMMMKYRDQRAGKINERLVITSEMIENIQSVKAYCWEEAMEKMIENLRQTELKLTRKAAYVRYFNSSAFFFSGFFVVFLSVLPYALIKGIILRKIFTTISFCIVLRMAVTRQFPWAVQTWYDSLGAINKIQDFLQKQEYKTLEYNLTTTEVVMENVTAFWEEGFGELFEKAKQNNNNRKTSNDDNNLFFSNFSLLGTPVLKDINFKIERGQLLAVAGSTGAGKTSLLMMIMGELEPSEGKIKHSGRISFCSQFSWIMPGTIKENIIFGVSYDEYRYRSVIKACQLEEDISKFAEKDNIVLGEGGITLSGGQRARISLARAVYKDADLYLLDSPFGYLDVLTEKEIFESCVCKLMANKTRILVTSKMEHLKKADKILILHEGSSYFYGTFSELQNLRPDFSSKLMGYDSFDQFSSERRNSILTETLRRFSLEGDAPVSWTETKKQSFKQTGEFGEKRKNSILNSINSIRKFSIVQKTPLQMNGIEEDSDEPLERRLSLVPDSEQGEAILPRISVINTGPALQVRRRQSVLNMMTHSVNQGQSIHRKTTASTRKVSLAPQANLTELDIYSRRLSQETGLEISEEINEEDLKECFFDDMESIPAVTTWNTYLRYITLHKSLIFVLIWCLVIFLAEVAASLVVLWLLRNTPFQDKGNSTYSRNNSYAVIITNTSSYYVFYIYVGVADTLLALGFFRGLPLVHTLITVSKILHHKMLHSVLQAPMSTLNTLKAGGILNRFSKDIAILDDLLPLTIFDFIQLLLIVIGAIAVVSVLQPYIFLATVPVIAAFVLLRAYFLQTSQQLKQLESAGRSPIFTHLVTSLKGLWTLRAFGRQPYFETLFHKALNLHTANWFLYLSTLRWFQMRIEMIFVIFFIAVTFISILTTGEGEGTVGIILTLAMNIMSTLQWAVNSSIDVDSLMRSVSRVFKFIDMPTEEGKPTKSTKAYKNGQLSKVMIIENSHVKKDDIWPSGGQMTIKDLTAKYIEGGNAILENISFSISPGQRVGLLGRTGSGKSTLLSAFLRLLNTEGEIQIDGVSWDSITLQQWRKAFGVIPQKVFIFTGTFRKNLDPYEQWSDQEIWKVADEVGLRTVIEQFPGKLDFVLVDGGCVLSHGHKQLMCLARSVLSKAKILLLDEPSAHLDPVTYQIIRRALKQAFADCTVILCEHRIEAMLECQQFLVIEENKVRQYDSIQKLLNEKSLFRQAISHSDRVKLFPHRNSSKYKSRPQIASLKEETEEEVQETRL</sequence>
<reference key="1">
    <citation type="submission" date="2005-10" db="EMBL/GenBank/DDBJ databases">
        <title>NISC comparative sequencing initiative.</title>
        <authorList>
            <person name="Antonellis A."/>
            <person name="Ayele K."/>
            <person name="Benjamin B."/>
            <person name="Blakesley R.W."/>
            <person name="Boakye A."/>
            <person name="Bouffard G.G."/>
            <person name="Brinkley C."/>
            <person name="Brooks S."/>
            <person name="Chu G."/>
            <person name="Coleman H."/>
            <person name="Engle J."/>
            <person name="Gestole M."/>
            <person name="Greene A."/>
            <person name="Guan X."/>
            <person name="Gupta J."/>
            <person name="Haghighi P."/>
            <person name="Han J."/>
            <person name="Hansen N."/>
            <person name="Ho S.-L."/>
            <person name="Hu P."/>
            <person name="Hunter G."/>
            <person name="Hurle B."/>
            <person name="Idol J.R."/>
            <person name="Kwong P."/>
            <person name="Laric P."/>
            <person name="Larson S."/>
            <person name="Lee-Lin S.-Q."/>
            <person name="Legaspi R."/>
            <person name="Madden M."/>
            <person name="Maduro Q.L."/>
            <person name="Maduro V.B."/>
            <person name="Margulies E.H."/>
            <person name="Masiello C."/>
            <person name="Maskeri B."/>
            <person name="McDowell J."/>
            <person name="Mojidi H.A."/>
            <person name="Mullikin J.C."/>
            <person name="Oestreicher J.S."/>
            <person name="Park M."/>
            <person name="Portnoy M.E."/>
            <person name="Prasad A."/>
            <person name="Puri O."/>
            <person name="Reddix-Dugue N."/>
            <person name="Schandler K."/>
            <person name="Schueler M.G."/>
            <person name="Sison C."/>
            <person name="Stantripop S."/>
            <person name="Stephen E."/>
            <person name="Taye A."/>
            <person name="Thomas J.W."/>
            <person name="Thomas P.J."/>
            <person name="Tsipouri V."/>
            <person name="Ung L."/>
            <person name="Vogt J.L."/>
            <person name="Wetherby K.D."/>
            <person name="Young A."/>
            <person name="Green E.D."/>
        </authorList>
    </citation>
    <scope>NUCLEOTIDE SEQUENCE [LARGE SCALE GENOMIC DNA]</scope>
</reference>
<dbReference type="EC" id="5.6.1.6" evidence="1"/>
<dbReference type="EMBL" id="DP000014">
    <property type="protein sequence ID" value="ABA90397.1"/>
    <property type="molecule type" value="Genomic_DNA"/>
</dbReference>
<dbReference type="SMR" id="Q2QLF9"/>
<dbReference type="FunCoup" id="Q2QLF9">
    <property type="interactions" value="537"/>
</dbReference>
<dbReference type="STRING" id="9483.ENSCJAP00000009011"/>
<dbReference type="GlyCosmos" id="Q2QLF9">
    <property type="glycosylation" value="3 sites, No reported glycans"/>
</dbReference>
<dbReference type="eggNOG" id="KOG0054">
    <property type="taxonomic scope" value="Eukaryota"/>
</dbReference>
<dbReference type="InParanoid" id="Q2QLF9"/>
<dbReference type="Proteomes" id="UP000008225">
    <property type="component" value="Unplaced"/>
</dbReference>
<dbReference type="GO" id="GO:0016324">
    <property type="term" value="C:apical plasma membrane"/>
    <property type="evidence" value="ECO:0000250"/>
    <property type="project" value="UniProtKB"/>
</dbReference>
<dbReference type="GO" id="GO:0034707">
    <property type="term" value="C:chloride channel complex"/>
    <property type="evidence" value="ECO:0007669"/>
    <property type="project" value="UniProtKB-KW"/>
</dbReference>
<dbReference type="GO" id="GO:0005829">
    <property type="term" value="C:cytosol"/>
    <property type="evidence" value="ECO:0007669"/>
    <property type="project" value="TreeGrafter"/>
</dbReference>
<dbReference type="GO" id="GO:0005769">
    <property type="term" value="C:early endosome"/>
    <property type="evidence" value="ECO:0000250"/>
    <property type="project" value="UniProtKB"/>
</dbReference>
<dbReference type="GO" id="GO:0031901">
    <property type="term" value="C:early endosome membrane"/>
    <property type="evidence" value="ECO:0007669"/>
    <property type="project" value="UniProtKB-SubCell"/>
</dbReference>
<dbReference type="GO" id="GO:0005789">
    <property type="term" value="C:endoplasmic reticulum membrane"/>
    <property type="evidence" value="ECO:0000250"/>
    <property type="project" value="UniProtKB"/>
</dbReference>
<dbReference type="GO" id="GO:0016020">
    <property type="term" value="C:membrane"/>
    <property type="evidence" value="ECO:0000250"/>
    <property type="project" value="UniProtKB"/>
</dbReference>
<dbReference type="GO" id="GO:0005634">
    <property type="term" value="C:nucleus"/>
    <property type="evidence" value="ECO:0000250"/>
    <property type="project" value="UniProtKB"/>
</dbReference>
<dbReference type="GO" id="GO:0005886">
    <property type="term" value="C:plasma membrane"/>
    <property type="evidence" value="ECO:0000250"/>
    <property type="project" value="UniProtKB"/>
</dbReference>
<dbReference type="GO" id="GO:0055038">
    <property type="term" value="C:recycling endosome membrane"/>
    <property type="evidence" value="ECO:0007669"/>
    <property type="project" value="UniProtKB-SubCell"/>
</dbReference>
<dbReference type="GO" id="GO:0140359">
    <property type="term" value="F:ABC-type transporter activity"/>
    <property type="evidence" value="ECO:0007669"/>
    <property type="project" value="InterPro"/>
</dbReference>
<dbReference type="GO" id="GO:0005524">
    <property type="term" value="F:ATP binding"/>
    <property type="evidence" value="ECO:0007669"/>
    <property type="project" value="UniProtKB-KW"/>
</dbReference>
<dbReference type="GO" id="GO:0016887">
    <property type="term" value="F:ATP hydrolysis activity"/>
    <property type="evidence" value="ECO:0000250"/>
    <property type="project" value="UniProtKB"/>
</dbReference>
<dbReference type="GO" id="GO:0015106">
    <property type="term" value="F:bicarbonate transmembrane transporter activity"/>
    <property type="evidence" value="ECO:0000250"/>
    <property type="project" value="UniProtKB"/>
</dbReference>
<dbReference type="GO" id="GO:0005254">
    <property type="term" value="F:chloride channel activity"/>
    <property type="evidence" value="ECO:0000250"/>
    <property type="project" value="UniProtKB"/>
</dbReference>
<dbReference type="GO" id="GO:0019869">
    <property type="term" value="F:chloride channel inhibitor activity"/>
    <property type="evidence" value="ECO:0000250"/>
    <property type="project" value="UniProtKB"/>
</dbReference>
<dbReference type="GO" id="GO:0015108">
    <property type="term" value="F:chloride transmembrane transporter activity"/>
    <property type="evidence" value="ECO:0000250"/>
    <property type="project" value="UniProtKB"/>
</dbReference>
<dbReference type="GO" id="GO:0005260">
    <property type="term" value="F:intracellularly ATP-gated chloride channel activity"/>
    <property type="evidence" value="ECO:0000250"/>
    <property type="project" value="UniProtKB"/>
</dbReference>
<dbReference type="GO" id="GO:0015701">
    <property type="term" value="P:bicarbonate transport"/>
    <property type="evidence" value="ECO:0000250"/>
    <property type="project" value="UniProtKB"/>
</dbReference>
<dbReference type="GO" id="GO:0071320">
    <property type="term" value="P:cellular response to cAMP"/>
    <property type="evidence" value="ECO:0000250"/>
    <property type="project" value="UniProtKB"/>
</dbReference>
<dbReference type="GO" id="GO:1904322">
    <property type="term" value="P:cellular response to forskolin"/>
    <property type="evidence" value="ECO:0000250"/>
    <property type="project" value="UniProtKB"/>
</dbReference>
<dbReference type="GO" id="GO:1902476">
    <property type="term" value="P:chloride transmembrane transport"/>
    <property type="evidence" value="ECO:0000250"/>
    <property type="project" value="UniProtKB"/>
</dbReference>
<dbReference type="GO" id="GO:0051454">
    <property type="term" value="P:intracellular pH elevation"/>
    <property type="evidence" value="ECO:0000250"/>
    <property type="project" value="UniProtKB"/>
</dbReference>
<dbReference type="GO" id="GO:0060081">
    <property type="term" value="P:membrane hyperpolarization"/>
    <property type="evidence" value="ECO:0000250"/>
    <property type="project" value="UniProtKB"/>
</dbReference>
<dbReference type="GO" id="GO:0050891">
    <property type="term" value="P:multicellular organismal-level water homeostasis"/>
    <property type="evidence" value="ECO:0000250"/>
    <property type="project" value="UniProtKB"/>
</dbReference>
<dbReference type="GO" id="GO:0034976">
    <property type="term" value="P:response to endoplasmic reticulum stress"/>
    <property type="evidence" value="ECO:0000250"/>
    <property type="project" value="UniProtKB"/>
</dbReference>
<dbReference type="GO" id="GO:0048240">
    <property type="term" value="P:sperm capacitation"/>
    <property type="evidence" value="ECO:0000250"/>
    <property type="project" value="UniProtKB"/>
</dbReference>
<dbReference type="GO" id="GO:0035377">
    <property type="term" value="P:transepithelial water transport"/>
    <property type="evidence" value="ECO:0000250"/>
    <property type="project" value="UniProtKB"/>
</dbReference>
<dbReference type="CDD" id="cd18594">
    <property type="entry name" value="ABC_6TM_CFTR_D1"/>
    <property type="match status" value="1"/>
</dbReference>
<dbReference type="CDD" id="cd18600">
    <property type="entry name" value="ABC_6TM_CFTR_D2"/>
    <property type="match status" value="1"/>
</dbReference>
<dbReference type="CDD" id="cd03291">
    <property type="entry name" value="ABCC_CFTR1"/>
    <property type="match status" value="1"/>
</dbReference>
<dbReference type="CDD" id="cd03289">
    <property type="entry name" value="ABCC_CFTR2"/>
    <property type="match status" value="1"/>
</dbReference>
<dbReference type="FunFam" id="1.20.1560.10:FF:000017">
    <property type="entry name" value="Cystic fibrosis transmembrane conductance regulator"/>
    <property type="match status" value="1"/>
</dbReference>
<dbReference type="FunFam" id="1.20.1560.10:FF:000019">
    <property type="entry name" value="Cystic fibrosis transmembrane conductance regulator"/>
    <property type="match status" value="1"/>
</dbReference>
<dbReference type="FunFam" id="3.40.50.300:FF:000581">
    <property type="entry name" value="Cystic fibrosis transmembrane conductance regulator"/>
    <property type="match status" value="1"/>
</dbReference>
<dbReference type="FunFam" id="3.40.50.300:FF:000591">
    <property type="entry name" value="Cystic fibrosis transmembrane conductance regulator"/>
    <property type="match status" value="1"/>
</dbReference>
<dbReference type="Gene3D" id="1.20.1560.10">
    <property type="entry name" value="ABC transporter type 1, transmembrane domain"/>
    <property type="match status" value="2"/>
</dbReference>
<dbReference type="Gene3D" id="3.40.50.300">
    <property type="entry name" value="P-loop containing nucleotide triphosphate hydrolases"/>
    <property type="match status" value="2"/>
</dbReference>
<dbReference type="InterPro" id="IPR003593">
    <property type="entry name" value="AAA+_ATPase"/>
</dbReference>
<dbReference type="InterPro" id="IPR011527">
    <property type="entry name" value="ABC1_TM_dom"/>
</dbReference>
<dbReference type="InterPro" id="IPR036640">
    <property type="entry name" value="ABC1_TM_sf"/>
</dbReference>
<dbReference type="InterPro" id="IPR003439">
    <property type="entry name" value="ABC_transporter-like_ATP-bd"/>
</dbReference>
<dbReference type="InterPro" id="IPR017871">
    <property type="entry name" value="ABC_transporter-like_CS"/>
</dbReference>
<dbReference type="InterPro" id="IPR050173">
    <property type="entry name" value="ABC_transporter_C-like"/>
</dbReference>
<dbReference type="InterPro" id="IPR009147">
    <property type="entry name" value="CFTR/ABCC7"/>
</dbReference>
<dbReference type="InterPro" id="IPR047082">
    <property type="entry name" value="CFTR1_ATP-bd_dom1"/>
</dbReference>
<dbReference type="InterPro" id="IPR025837">
    <property type="entry name" value="CFTR_reg_dom"/>
</dbReference>
<dbReference type="InterPro" id="IPR027417">
    <property type="entry name" value="P-loop_NTPase"/>
</dbReference>
<dbReference type="NCBIfam" id="TIGR01271">
    <property type="entry name" value="CFTR_protein"/>
    <property type="match status" value="1"/>
</dbReference>
<dbReference type="PANTHER" id="PTHR24223">
    <property type="entry name" value="ATP-BINDING CASSETTE SUB-FAMILY C"/>
    <property type="match status" value="1"/>
</dbReference>
<dbReference type="PANTHER" id="PTHR24223:SF19">
    <property type="entry name" value="CYSTIC FIBROSIS TRANSMEMBRANE CONDUCTANCE REGULATOR"/>
    <property type="match status" value="1"/>
</dbReference>
<dbReference type="Pfam" id="PF00664">
    <property type="entry name" value="ABC_membrane"/>
    <property type="match status" value="2"/>
</dbReference>
<dbReference type="Pfam" id="PF00005">
    <property type="entry name" value="ABC_tran"/>
    <property type="match status" value="2"/>
</dbReference>
<dbReference type="Pfam" id="PF14396">
    <property type="entry name" value="CFTR_R"/>
    <property type="match status" value="1"/>
</dbReference>
<dbReference type="PRINTS" id="PR01851">
    <property type="entry name" value="CYSFIBREGLTR"/>
</dbReference>
<dbReference type="SMART" id="SM00382">
    <property type="entry name" value="AAA"/>
    <property type="match status" value="2"/>
</dbReference>
<dbReference type="SUPFAM" id="SSF90123">
    <property type="entry name" value="ABC transporter transmembrane region"/>
    <property type="match status" value="2"/>
</dbReference>
<dbReference type="SUPFAM" id="SSF52540">
    <property type="entry name" value="P-loop containing nucleoside triphosphate hydrolases"/>
    <property type="match status" value="2"/>
</dbReference>
<dbReference type="PROSITE" id="PS50929">
    <property type="entry name" value="ABC_TM1F"/>
    <property type="match status" value="2"/>
</dbReference>
<dbReference type="PROSITE" id="PS00211">
    <property type="entry name" value="ABC_TRANSPORTER_1"/>
    <property type="match status" value="1"/>
</dbReference>
<dbReference type="PROSITE" id="PS50893">
    <property type="entry name" value="ABC_TRANSPORTER_2"/>
    <property type="match status" value="2"/>
</dbReference>
<organism>
    <name type="scientific">Callithrix jacchus</name>
    <name type="common">White-tufted-ear marmoset</name>
    <dbReference type="NCBI Taxonomy" id="9483"/>
    <lineage>
        <taxon>Eukaryota</taxon>
        <taxon>Metazoa</taxon>
        <taxon>Chordata</taxon>
        <taxon>Craniata</taxon>
        <taxon>Vertebrata</taxon>
        <taxon>Euteleostomi</taxon>
        <taxon>Mammalia</taxon>
        <taxon>Eutheria</taxon>
        <taxon>Euarchontoglires</taxon>
        <taxon>Primates</taxon>
        <taxon>Haplorrhini</taxon>
        <taxon>Platyrrhini</taxon>
        <taxon>Cebidae</taxon>
        <taxon>Callitrichinae</taxon>
        <taxon>Callithrix</taxon>
        <taxon>Callithrix</taxon>
    </lineage>
</organism>
<comment type="function">
    <text evidence="1 2">Epithelial ion channel that plays an important role in the regulation of epithelial ion and water transport and fluid homeostasis. Mediates the transport of chloride ions across the cell membrane (By similarity). Possesses an intrinsic ATPase activity and utilizes ATP to gate its channel; the passive flow of anions through the channel is gated by cycles of ATP binding and hydrolysis by the ATP-binding domains (By similarity). The ion channel is also permeable to HCO(3)(-); selectivity depends on the extracellular chloride concentration. Exerts its function also by modulating the activity of other ion channels and transporters. Contributes to the regulation of the pH and the ion content of the epithelial fluid layer. Modulates the activity of the epithelial sodium channel (ENaC) complex, in part by regulating the cell surface expression of the ENaC complex. May regulate bicarbonate secretion and salvage in epithelial cells by regulating the transporter SLC4A7. Can inhibit the chloride channel activity of ANO1 (By similarity). Plays a role in the chloride and bicarbonate homeostasis during sperm epididymal maturation and capacitation (By similarity).</text>
</comment>
<comment type="catalytic activity">
    <reaction evidence="1">
        <text>ATP + H2O + closed Cl(-) channel = ADP + phosphate + open Cl(-) channel.</text>
        <dbReference type="EC" id="5.6.1.6"/>
    </reaction>
</comment>
<comment type="catalytic activity">
    <reaction evidence="1">
        <text>chloride(in) = chloride(out)</text>
        <dbReference type="Rhea" id="RHEA:29823"/>
        <dbReference type="ChEBI" id="CHEBI:17996"/>
    </reaction>
</comment>
<comment type="catalytic activity">
    <reaction evidence="1">
        <text>hydrogencarbonate(in) = hydrogencarbonate(out)</text>
        <dbReference type="Rhea" id="RHEA:28695"/>
        <dbReference type="ChEBI" id="CHEBI:17544"/>
    </reaction>
</comment>
<comment type="catalytic activity">
    <reaction evidence="1">
        <text>ATP + H2O = ADP + phosphate + H(+)</text>
        <dbReference type="Rhea" id="RHEA:13065"/>
        <dbReference type="ChEBI" id="CHEBI:15377"/>
        <dbReference type="ChEBI" id="CHEBI:15378"/>
        <dbReference type="ChEBI" id="CHEBI:30616"/>
        <dbReference type="ChEBI" id="CHEBI:43474"/>
        <dbReference type="ChEBI" id="CHEBI:456216"/>
    </reaction>
    <physiologicalReaction direction="left-to-right" evidence="1">
        <dbReference type="Rhea" id="RHEA:13066"/>
    </physiologicalReaction>
</comment>
<comment type="subunit">
    <text evidence="1 2 3">Monomer; does not require oligomerization for channel activity. May form oligomers in the membrane (By similarity). Interacts with SLC26A3, SLC26A6 and NHERF1 (By similarity). Interacts with SHANK2 (By similarity). Interacts with MYO6 (By similarity). Interacts (via C-terminus) with GOPC (via PDZ domain); this promotes CFTR internalization and thereby decreases channel activity. Interacts with SLC4A7 through NHERF1. Found in a complex with MYO5B and RAB11A. Interacts with ANO1. Interacts with SLC26A8 (By similarity). Interacts with AHCYL1; the interaction increases CFTR activity (By similarity). Interacts with CSE1L (By similarity). The core-glycosylated form interacts with GORASP2 (via PDZ GRASP-type 1 domain) in respone to ER stress (By similarity). Interacts with MARCHF2; the interaction leads to CFTR ubiqtuitination and degradation (By similarity). Interacts with ADGRG2 (By similarity).</text>
</comment>
<comment type="subcellular location">
    <subcellularLocation>
        <location evidence="2">Apical cell membrane</location>
        <topology evidence="1">Multi-pass membrane protein</topology>
    </subcellularLocation>
    <subcellularLocation>
        <location evidence="1">Early endosome membrane</location>
        <topology evidence="1">Multi-pass membrane protein</topology>
    </subcellularLocation>
    <subcellularLocation>
        <location evidence="2">Cell membrane</location>
        <topology evidence="1">Multi-pass membrane protein</topology>
    </subcellularLocation>
    <subcellularLocation>
        <location evidence="1">Recycling endosome membrane</location>
        <topology evidence="1">Multi-pass membrane protein</topology>
    </subcellularLocation>
    <subcellularLocation>
        <location evidence="1">Endoplasmic reticulum membrane</location>
        <topology evidence="1">Multi-pass membrane protein</topology>
    </subcellularLocation>
    <subcellularLocation>
        <location evidence="3">Nucleus</location>
    </subcellularLocation>
    <text evidence="1 3">The channel is internalized from the cell surface into an endosomal recycling compartment, from where it is recycled to the cell membrane. In the oviduct and bronchus, detected on the apical side of epithelial cells, but not associated with cilia. In Sertoli cells, a processed product is detected in the nucleus. ER stress induces GORASP2-mediated unconventional (ER/Golgi-independent) trafficking of core-glycosylated CFTR to cell membrane.</text>
</comment>
<comment type="domain">
    <text evidence="1 2">Binds and hydrolyzes ATP via the two cytoplasmic ABC transporter nucleotide-binding domains. The two ATP-binding domains interact with each other, forming a head-to-tail dimer. Normal ATPase activity requires interaction between the two domains. The first ABC transporter nucleotide-binding domain has no ATPase activity by itself.</text>
</comment>
<comment type="domain">
    <text evidence="1">The PDZ-binding motif mediates interactions with GOPC and with the SLC4A7, NHERF1/EBP50 complex.</text>
</comment>
<comment type="domain">
    <text evidence="1">The disordered R region mediates channel activation when it is phosphorylated, but not in the absence of phosphorylation.</text>
</comment>
<comment type="PTM">
    <text evidence="1">N-glycosylated.</text>
</comment>
<comment type="PTM">
    <text evidence="1">Phosphorylated; cAMP treatment promotes phosphorylation and activates the channel. Dephosphorylation decreases the ATPase activity (in vitro). Phosphorylation at PKA sites activates the channel. Phosphorylation at PKC sites enhances the response to phosphorylation by PKA. Phosphorylated by AMPK; this inhibits channel activity.</text>
</comment>
<comment type="PTM">
    <text evidence="1">Ubiquitinated, leading to its degradation in the lysosome. Deubiquitination by USP10 in early endosomes enhances its endocytic recycling to the cell membrane. Ubiquitinated by RNF185 during ER stress. Ubiquitinated by MARCHF2 (By similarity).</text>
</comment>
<comment type="similarity">
    <text evidence="8">Belongs to the ABC transporter superfamily. ABCC family. CFTR transporter (TC 3.A.1.202) subfamily.</text>
</comment>
<name>CFTR_CALJA</name>
<keyword id="KW-0067">ATP-binding</keyword>
<keyword id="KW-1003">Cell membrane</keyword>
<keyword id="KW-0868">Chloride</keyword>
<keyword id="KW-0869">Chloride channel</keyword>
<keyword id="KW-0256">Endoplasmic reticulum</keyword>
<keyword id="KW-0967">Endosome</keyword>
<keyword id="KW-0325">Glycoprotein</keyword>
<keyword id="KW-0407">Ion channel</keyword>
<keyword id="KW-0406">Ion transport</keyword>
<keyword id="KW-0413">Isomerase</keyword>
<keyword id="KW-1017">Isopeptide bond</keyword>
<keyword id="KW-0449">Lipoprotein</keyword>
<keyword id="KW-0472">Membrane</keyword>
<keyword id="KW-0547">Nucleotide-binding</keyword>
<keyword id="KW-0539">Nucleus</keyword>
<keyword id="KW-0564">Palmitate</keyword>
<keyword id="KW-0597">Phosphoprotein</keyword>
<keyword id="KW-1185">Reference proteome</keyword>
<keyword id="KW-0677">Repeat</keyword>
<keyword id="KW-0812">Transmembrane</keyword>
<keyword id="KW-1133">Transmembrane helix</keyword>
<keyword id="KW-0813">Transport</keyword>
<keyword id="KW-0832">Ubl conjugation</keyword>
<feature type="chain" id="PRO_0000227005" description="Cystic fibrosis transmembrane conductance regulator">
    <location>
        <begin position="1"/>
        <end position="1481"/>
    </location>
</feature>
<feature type="topological domain" description="Cytoplasmic" evidence="1">
    <location>
        <begin position="1"/>
        <end position="77"/>
    </location>
</feature>
<feature type="transmembrane region" description="Helical; Name=1" evidence="1">
    <location>
        <begin position="78"/>
        <end position="98"/>
    </location>
</feature>
<feature type="topological domain" description="Extracellular" evidence="1">
    <location>
        <begin position="99"/>
        <end position="122"/>
    </location>
</feature>
<feature type="transmembrane region" description="Helical; Name=2" evidence="1">
    <location>
        <begin position="123"/>
        <end position="146"/>
    </location>
</feature>
<feature type="topological domain" description="Cytoplasmic" evidence="1">
    <location>
        <begin position="147"/>
        <end position="195"/>
    </location>
</feature>
<feature type="transmembrane region" description="Helical; Name=3" evidence="1">
    <location>
        <begin position="196"/>
        <end position="216"/>
    </location>
</feature>
<feature type="topological domain" description="Extracellular" evidence="1">
    <location>
        <begin position="217"/>
        <end position="222"/>
    </location>
</feature>
<feature type="transmembrane region" description="Helical; Name=4" evidence="1">
    <location>
        <begin position="223"/>
        <end position="243"/>
    </location>
</feature>
<feature type="topological domain" description="Cytoplasmic" evidence="1">
    <location>
        <begin position="244"/>
        <end position="298"/>
    </location>
</feature>
<feature type="transmembrane region" description="Helical; Name=5" evidence="1">
    <location>
        <begin position="299"/>
        <end position="319"/>
    </location>
</feature>
<feature type="topological domain" description="Extracellular" evidence="1">
    <location>
        <begin position="320"/>
        <end position="339"/>
    </location>
</feature>
<feature type="transmembrane region" description="Helical; Name=6" evidence="1">
    <location>
        <begin position="340"/>
        <end position="358"/>
    </location>
</feature>
<feature type="topological domain" description="Cytoplasmic" evidence="1">
    <location>
        <begin position="359"/>
        <end position="858"/>
    </location>
</feature>
<feature type="transmembrane region" description="Helical; Name=7" evidence="1">
    <location>
        <begin position="859"/>
        <end position="879"/>
    </location>
</feature>
<feature type="topological domain" description="Extracellular" evidence="1">
    <location>
        <begin position="880"/>
        <end position="918"/>
    </location>
</feature>
<feature type="transmembrane region" description="Discontinuously helical; Name=8" evidence="1">
    <location>
        <begin position="919"/>
        <end position="939"/>
    </location>
</feature>
<feature type="topological domain" description="Cytoplasmic" evidence="1">
    <location>
        <begin position="940"/>
        <end position="990"/>
    </location>
</feature>
<feature type="transmembrane region" description="Helical; Name=9" evidence="1">
    <location>
        <begin position="991"/>
        <end position="1011"/>
    </location>
</feature>
<feature type="topological domain" description="Extracellular" evidence="1">
    <location>
        <begin position="1012"/>
        <end position="1013"/>
    </location>
</feature>
<feature type="transmembrane region" description="Helical; Name=10" evidence="1">
    <location>
        <begin position="1014"/>
        <end position="1034"/>
    </location>
</feature>
<feature type="topological domain" description="Cytoplasmic" evidence="1">
    <location>
        <begin position="1035"/>
        <end position="1095"/>
    </location>
</feature>
<feature type="transmembrane region" description="Helical; Name=11" evidence="1">
    <location>
        <begin position="1096"/>
        <end position="1116"/>
    </location>
</feature>
<feature type="topological domain" description="Extracellular" evidence="1">
    <location>
        <begin position="1117"/>
        <end position="1130"/>
    </location>
</feature>
<feature type="transmembrane region" description="Helical; Name=12" evidence="1">
    <location>
        <begin position="1131"/>
        <end position="1151"/>
    </location>
</feature>
<feature type="topological domain" description="Cytoplasmic" evidence="1">
    <location>
        <begin position="1152"/>
        <end position="1481"/>
    </location>
</feature>
<feature type="domain" description="ABC transmembrane type-1 1" evidence="6">
    <location>
        <begin position="81"/>
        <end position="365"/>
    </location>
</feature>
<feature type="domain" description="ABC transporter 1" evidence="5">
    <location>
        <begin position="423"/>
        <end position="646"/>
    </location>
</feature>
<feature type="domain" description="ABC transmembrane type-1 2" evidence="6">
    <location>
        <begin position="859"/>
        <end position="1155"/>
    </location>
</feature>
<feature type="domain" description="ABC transporter 2" evidence="5">
    <location>
        <begin position="1211"/>
        <end position="1444"/>
    </location>
</feature>
<feature type="region of interest" description="Disordered R region" evidence="1">
    <location>
        <begin position="654"/>
        <end position="831"/>
    </location>
</feature>
<feature type="region of interest" description="Interaction with GORASP2" evidence="1">
    <location>
        <begin position="1387"/>
        <end position="1481"/>
    </location>
</feature>
<feature type="region of interest" description="Disordered" evidence="7">
    <location>
        <begin position="1453"/>
        <end position="1481"/>
    </location>
</feature>
<feature type="short sequence motif" description="PDZ-binding" evidence="1">
    <location>
        <begin position="1479"/>
        <end position="1481"/>
    </location>
</feature>
<feature type="compositionally biased region" description="Acidic residues" evidence="7">
    <location>
        <begin position="1471"/>
        <end position="1481"/>
    </location>
</feature>
<feature type="binding site" evidence="1">
    <location>
        <position position="401"/>
    </location>
    <ligand>
        <name>ATP</name>
        <dbReference type="ChEBI" id="CHEBI:30616"/>
        <label>1</label>
    </ligand>
</feature>
<feature type="binding site" evidence="1">
    <location>
        <position position="434"/>
    </location>
    <ligand>
        <name>ATP</name>
        <dbReference type="ChEBI" id="CHEBI:30616"/>
        <label>1</label>
    </ligand>
</feature>
<feature type="binding site" evidence="5">
    <location>
        <begin position="458"/>
        <end position="465"/>
    </location>
    <ligand>
        <name>ATP</name>
        <dbReference type="ChEBI" id="CHEBI:30616"/>
        <label>1</label>
    </ligand>
</feature>
<feature type="binding site" evidence="2">
    <location>
        <position position="493"/>
    </location>
    <ligand>
        <name>ATP</name>
        <dbReference type="ChEBI" id="CHEBI:30616"/>
        <label>1</label>
    </ligand>
</feature>
<feature type="binding site" evidence="1">
    <location>
        <position position="1220"/>
    </location>
    <ligand>
        <name>ATP</name>
        <dbReference type="ChEBI" id="CHEBI:30616"/>
        <label>2</label>
    </ligand>
</feature>
<feature type="binding site" evidence="5">
    <location>
        <begin position="1245"/>
        <end position="1252"/>
    </location>
    <ligand>
        <name>ATP</name>
        <dbReference type="ChEBI" id="CHEBI:30616"/>
        <label>2</label>
    </ligand>
</feature>
<feature type="modified residue" description="Phosphoserine" evidence="1">
    <location>
        <position position="549"/>
    </location>
</feature>
<feature type="modified residue" description="Phosphoserine" evidence="1">
    <location>
        <position position="660"/>
    </location>
</feature>
<feature type="modified residue" description="Phosphoserine; by PKA" evidence="1">
    <location>
        <position position="670"/>
    </location>
</feature>
<feature type="modified residue" description="Phosphoserine" evidence="1">
    <location>
        <position position="686"/>
    </location>
</feature>
<feature type="modified residue" description="Phosphoserine" evidence="1">
    <location>
        <position position="700"/>
    </location>
</feature>
<feature type="modified residue" description="Phosphoserine" evidence="1">
    <location>
        <position position="712"/>
    </location>
</feature>
<feature type="modified residue" description="Phosphothreonine" evidence="1">
    <location>
        <position position="717"/>
    </location>
</feature>
<feature type="modified residue" description="Phosphoserine" evidence="1">
    <location>
        <position position="737"/>
    </location>
</feature>
<feature type="modified residue" description="Phosphoserine" evidence="1">
    <location>
        <position position="753"/>
    </location>
</feature>
<feature type="modified residue" description="Phosphoserine" evidence="1">
    <location>
        <position position="768"/>
    </location>
</feature>
<feature type="modified residue" description="Phosphoserine" evidence="1">
    <location>
        <position position="790"/>
    </location>
</feature>
<feature type="modified residue" description="Phosphoserine" evidence="1">
    <location>
        <position position="795"/>
    </location>
</feature>
<feature type="modified residue" description="Phosphoserine" evidence="1">
    <location>
        <position position="813"/>
    </location>
</feature>
<feature type="modified residue" description="Phosphoserine" evidence="1">
    <location>
        <position position="1445"/>
    </location>
</feature>
<feature type="modified residue" description="Phosphoserine" evidence="1">
    <location>
        <position position="1457"/>
    </location>
</feature>
<feature type="lipid moiety-binding region" description="S-palmitoyl cysteine" evidence="1">
    <location>
        <position position="524"/>
    </location>
</feature>
<feature type="lipid moiety-binding region" description="S-palmitoyl cysteine" evidence="1">
    <location>
        <position position="1396"/>
    </location>
</feature>
<feature type="glycosylation site" description="N-linked (GlcNAc...) asparagine" evidence="4">
    <location>
        <position position="894"/>
    </location>
</feature>
<feature type="glycosylation site" description="N-linked (GlcNAc...) asparagine" evidence="4">
    <location>
        <position position="900"/>
    </location>
</feature>
<feature type="glycosylation site" description="N-linked (GlcNAc...) asparagine" evidence="4">
    <location>
        <position position="909"/>
    </location>
</feature>
<feature type="cross-link" description="Glycyl lysine isopeptide (Lys-Gly) (interchain with G-Cter in ubiquitin)" evidence="1">
    <location>
        <position position="688"/>
    </location>
</feature>
<protein>
    <recommendedName>
        <fullName evidence="1">Cystic fibrosis transmembrane conductance regulator</fullName>
        <shortName>CFTR</shortName>
    </recommendedName>
    <alternativeName>
        <fullName>ATP-binding cassette sub-family C member 7</fullName>
    </alternativeName>
    <alternativeName>
        <fullName>Channel conductance-controlling ATPase</fullName>
        <ecNumber evidence="1">5.6.1.6</ecNumber>
    </alternativeName>
    <alternativeName>
        <fullName>cAMP-dependent chloride channel</fullName>
    </alternativeName>
</protein>
<accession>Q2QLF9</accession>